<keyword id="KW-0963">Cytoplasm</keyword>
<keyword id="KW-0312">Gluconeogenesis</keyword>
<keyword id="KW-0324">Glycolysis</keyword>
<keyword id="KW-0413">Isomerase</keyword>
<accession>Q848I4</accession>
<feature type="chain" id="PRO_0000180709" description="Glucose-6-phosphate isomerase">
    <location>
        <begin position="1"/>
        <end position="554"/>
    </location>
</feature>
<feature type="active site" description="Proton donor" evidence="1">
    <location>
        <position position="359"/>
    </location>
</feature>
<feature type="active site" evidence="1">
    <location>
        <position position="390"/>
    </location>
</feature>
<feature type="active site" evidence="1">
    <location>
        <position position="518"/>
    </location>
</feature>
<reference key="1">
    <citation type="submission" date="2003-01" db="EMBL/GenBank/DDBJ databases">
        <title>A modified IVET system for plant-associated fluorescent Pseudomonas spp.</title>
        <authorList>
            <person name="Mavrodi D.V."/>
            <person name="Weller D.M."/>
            <person name="Thomashow L.S."/>
        </authorList>
    </citation>
    <scope>NUCLEOTIDE SEQUENCE [GENOMIC DNA]</scope>
    <source>
        <strain>Q8r1-96</strain>
    </source>
</reference>
<dbReference type="EC" id="5.3.1.9" evidence="1"/>
<dbReference type="EMBL" id="AY210414">
    <property type="protein sequence ID" value="AAO60163.1"/>
    <property type="molecule type" value="Genomic_DNA"/>
</dbReference>
<dbReference type="eggNOG" id="COG0166">
    <property type="taxonomic scope" value="Bacteria"/>
</dbReference>
<dbReference type="UniPathway" id="UPA00109">
    <property type="reaction ID" value="UER00181"/>
</dbReference>
<dbReference type="UniPathway" id="UPA00138"/>
<dbReference type="GO" id="GO:0005829">
    <property type="term" value="C:cytosol"/>
    <property type="evidence" value="ECO:0007669"/>
    <property type="project" value="TreeGrafter"/>
</dbReference>
<dbReference type="GO" id="GO:0097367">
    <property type="term" value="F:carbohydrate derivative binding"/>
    <property type="evidence" value="ECO:0007669"/>
    <property type="project" value="InterPro"/>
</dbReference>
<dbReference type="GO" id="GO:0004347">
    <property type="term" value="F:glucose-6-phosphate isomerase activity"/>
    <property type="evidence" value="ECO:0007669"/>
    <property type="project" value="UniProtKB-UniRule"/>
</dbReference>
<dbReference type="GO" id="GO:0048029">
    <property type="term" value="F:monosaccharide binding"/>
    <property type="evidence" value="ECO:0007669"/>
    <property type="project" value="TreeGrafter"/>
</dbReference>
<dbReference type="GO" id="GO:0006094">
    <property type="term" value="P:gluconeogenesis"/>
    <property type="evidence" value="ECO:0007669"/>
    <property type="project" value="UniProtKB-UniRule"/>
</dbReference>
<dbReference type="GO" id="GO:0051156">
    <property type="term" value="P:glucose 6-phosphate metabolic process"/>
    <property type="evidence" value="ECO:0007669"/>
    <property type="project" value="TreeGrafter"/>
</dbReference>
<dbReference type="GO" id="GO:0006096">
    <property type="term" value="P:glycolytic process"/>
    <property type="evidence" value="ECO:0007669"/>
    <property type="project" value="UniProtKB-UniRule"/>
</dbReference>
<dbReference type="CDD" id="cd05015">
    <property type="entry name" value="SIS_PGI_1"/>
    <property type="match status" value="1"/>
</dbReference>
<dbReference type="CDD" id="cd05016">
    <property type="entry name" value="SIS_PGI_2"/>
    <property type="match status" value="1"/>
</dbReference>
<dbReference type="FunFam" id="3.40.50.10490:FF:000018">
    <property type="entry name" value="Glucose-6-phosphate isomerase"/>
    <property type="match status" value="1"/>
</dbReference>
<dbReference type="Gene3D" id="1.10.1390.10">
    <property type="match status" value="1"/>
</dbReference>
<dbReference type="Gene3D" id="3.40.50.10490">
    <property type="entry name" value="Glucose-6-phosphate isomerase like protein, domain 1"/>
    <property type="match status" value="2"/>
</dbReference>
<dbReference type="HAMAP" id="MF_00473">
    <property type="entry name" value="G6P_isomerase"/>
    <property type="match status" value="1"/>
</dbReference>
<dbReference type="InterPro" id="IPR001672">
    <property type="entry name" value="G6P_Isomerase"/>
</dbReference>
<dbReference type="InterPro" id="IPR023096">
    <property type="entry name" value="G6P_Isomerase_C"/>
</dbReference>
<dbReference type="InterPro" id="IPR018189">
    <property type="entry name" value="Phosphoglucose_isomerase_CS"/>
</dbReference>
<dbReference type="InterPro" id="IPR046348">
    <property type="entry name" value="SIS_dom_sf"/>
</dbReference>
<dbReference type="InterPro" id="IPR035476">
    <property type="entry name" value="SIS_PGI_1"/>
</dbReference>
<dbReference type="InterPro" id="IPR035482">
    <property type="entry name" value="SIS_PGI_2"/>
</dbReference>
<dbReference type="NCBIfam" id="NF001211">
    <property type="entry name" value="PRK00179.1"/>
    <property type="match status" value="1"/>
</dbReference>
<dbReference type="PANTHER" id="PTHR11469">
    <property type="entry name" value="GLUCOSE-6-PHOSPHATE ISOMERASE"/>
    <property type="match status" value="1"/>
</dbReference>
<dbReference type="PANTHER" id="PTHR11469:SF1">
    <property type="entry name" value="GLUCOSE-6-PHOSPHATE ISOMERASE"/>
    <property type="match status" value="1"/>
</dbReference>
<dbReference type="Pfam" id="PF00342">
    <property type="entry name" value="PGI"/>
    <property type="match status" value="1"/>
</dbReference>
<dbReference type="PRINTS" id="PR00662">
    <property type="entry name" value="G6PISOMERASE"/>
</dbReference>
<dbReference type="SUPFAM" id="SSF53697">
    <property type="entry name" value="SIS domain"/>
    <property type="match status" value="1"/>
</dbReference>
<dbReference type="PROSITE" id="PS00765">
    <property type="entry name" value="P_GLUCOSE_ISOMERASE_1"/>
    <property type="match status" value="1"/>
</dbReference>
<dbReference type="PROSITE" id="PS00174">
    <property type="entry name" value="P_GLUCOSE_ISOMERASE_2"/>
    <property type="match status" value="1"/>
</dbReference>
<dbReference type="PROSITE" id="PS51463">
    <property type="entry name" value="P_GLUCOSE_ISOMERASE_3"/>
    <property type="match status" value="1"/>
</dbReference>
<protein>
    <recommendedName>
        <fullName evidence="1">Glucose-6-phosphate isomerase</fullName>
        <shortName evidence="1">GPI</shortName>
        <ecNumber evidence="1">5.3.1.9</ecNumber>
    </recommendedName>
    <alternativeName>
        <fullName evidence="1">Phosphoglucose isomerase</fullName>
        <shortName evidence="1">PGI</shortName>
    </alternativeName>
    <alternativeName>
        <fullName evidence="1">Phosphohexose isomerase</fullName>
        <shortName evidence="1">PHI</shortName>
    </alternativeName>
</protein>
<comment type="function">
    <text evidence="1">Catalyzes the reversible isomerization of glucose-6-phosphate to fructose-6-phosphate.</text>
</comment>
<comment type="catalytic activity">
    <reaction evidence="1">
        <text>alpha-D-glucose 6-phosphate = beta-D-fructose 6-phosphate</text>
        <dbReference type="Rhea" id="RHEA:11816"/>
        <dbReference type="ChEBI" id="CHEBI:57634"/>
        <dbReference type="ChEBI" id="CHEBI:58225"/>
        <dbReference type="EC" id="5.3.1.9"/>
    </reaction>
</comment>
<comment type="pathway">
    <text evidence="1">Carbohydrate biosynthesis; gluconeogenesis.</text>
</comment>
<comment type="pathway">
    <text evidence="1">Carbohydrate degradation; glycolysis; D-glyceraldehyde 3-phosphate and glycerone phosphate from D-glucose: step 2/4.</text>
</comment>
<comment type="subcellular location">
    <subcellularLocation>
        <location evidence="1">Cytoplasm</location>
    </subcellularLocation>
</comment>
<comment type="similarity">
    <text evidence="1">Belongs to the GPI family.</text>
</comment>
<proteinExistence type="inferred from homology"/>
<evidence type="ECO:0000255" key="1">
    <source>
        <dbReference type="HAMAP-Rule" id="MF_00473"/>
    </source>
</evidence>
<sequence length="554" mass="61526">MAYYRTPHDVTALPAWQALNDHRKAMQDFSMREAFNADPQRFTQFTLSSCGLFLDYSKNLINAQTRDLLVGLANEVDLKGAIKSLFEGEIVNASENRPALHTALRRPVGDKLLVNGVNVMPDVHKVLNQITDLVGRIHDGLWRGYTEKPITDVVNIGIGGSFLGPELVSEALLSYAQKGVRCHYLANIDGSEFHELTMKLRAETTLFIVSSKSFNTLETLKNAQAARAWYLAQGGSEAELYRHFIAVSSNNAAAVAFGIREENIFPMWDWVGGRYSLWSAIGLPIALAIGMSNFKELLSGAYSMDQHFQSAPFEQNMPVLLALLGVWYGNFWGAQSHAILPYDHYLRNITKHLQQLDMESNGKSVRQDGTPVSTDTGPVIWGGVGCNGQHAYHQLLHQGTQLIPADFIVPIVSFNPVSDHHQWLYANCLSQSQALMLGKTRAEAEXELRDKGASEEEVQKLASHKVIPGNRPSNTLVVERISPRRLGALVALYEHKVFVQSVVWGINAFDQWGVELGKELGKGVYNRLVGSEESLAEDASTQGLINYFRGRHRG</sequence>
<gene>
    <name evidence="1" type="primary">pgi</name>
</gene>
<organism>
    <name type="scientific">Pseudomonas fluorescens</name>
    <dbReference type="NCBI Taxonomy" id="294"/>
    <lineage>
        <taxon>Bacteria</taxon>
        <taxon>Pseudomonadati</taxon>
        <taxon>Pseudomonadota</taxon>
        <taxon>Gammaproteobacteria</taxon>
        <taxon>Pseudomonadales</taxon>
        <taxon>Pseudomonadaceae</taxon>
        <taxon>Pseudomonas</taxon>
    </lineage>
</organism>
<name>G6PI_PSEFL</name>